<name>UVRB_CLOB8</name>
<gene>
    <name evidence="1" type="primary">uvrB</name>
    <name type="ordered locus">Cbei_4864</name>
</gene>
<keyword id="KW-0067">ATP-binding</keyword>
<keyword id="KW-0963">Cytoplasm</keyword>
<keyword id="KW-0227">DNA damage</keyword>
<keyword id="KW-0228">DNA excision</keyword>
<keyword id="KW-0234">DNA repair</keyword>
<keyword id="KW-0267">Excision nuclease</keyword>
<keyword id="KW-0347">Helicase</keyword>
<keyword id="KW-0378">Hydrolase</keyword>
<keyword id="KW-0547">Nucleotide-binding</keyword>
<keyword id="KW-0742">SOS response</keyword>
<accession>A6M2Z0</accession>
<comment type="function">
    <text evidence="1">The UvrABC repair system catalyzes the recognition and processing of DNA lesions. A damage recognition complex composed of 2 UvrA and 2 UvrB subunits scans DNA for abnormalities. Upon binding of the UvrA(2)B(2) complex to a putative damaged site, the DNA wraps around one UvrB monomer. DNA wrap is dependent on ATP binding by UvrB and probably causes local melting of the DNA helix, facilitating insertion of UvrB beta-hairpin between the DNA strands. Then UvrB probes one DNA strand for the presence of a lesion. If a lesion is found the UvrA subunits dissociate and the UvrB-DNA preincision complex is formed. This complex is subsequently bound by UvrC and the second UvrB is released. If no lesion is found, the DNA wraps around the other UvrB subunit that will check the other stand for damage.</text>
</comment>
<comment type="subunit">
    <text evidence="1">Forms a heterotetramer with UvrA during the search for lesions. Interacts with UvrC in an incision complex.</text>
</comment>
<comment type="subcellular location">
    <subcellularLocation>
        <location evidence="1">Cytoplasm</location>
    </subcellularLocation>
</comment>
<comment type="domain">
    <text evidence="1">The beta-hairpin motif is involved in DNA binding.</text>
</comment>
<comment type="similarity">
    <text evidence="1">Belongs to the UvrB family.</text>
</comment>
<feature type="chain" id="PRO_1000077877" description="UvrABC system protein B">
    <location>
        <begin position="1"/>
        <end position="657"/>
    </location>
</feature>
<feature type="domain" description="Helicase ATP-binding" evidence="1">
    <location>
        <begin position="25"/>
        <end position="182"/>
    </location>
</feature>
<feature type="domain" description="Helicase C-terminal" evidence="1">
    <location>
        <begin position="429"/>
        <end position="595"/>
    </location>
</feature>
<feature type="domain" description="UVR" evidence="1">
    <location>
        <begin position="621"/>
        <end position="656"/>
    </location>
</feature>
<feature type="short sequence motif" description="Beta-hairpin">
    <location>
        <begin position="91"/>
        <end position="114"/>
    </location>
</feature>
<feature type="binding site" evidence="1">
    <location>
        <begin position="38"/>
        <end position="45"/>
    </location>
    <ligand>
        <name>ATP</name>
        <dbReference type="ChEBI" id="CHEBI:30616"/>
    </ligand>
</feature>
<protein>
    <recommendedName>
        <fullName evidence="1">UvrABC system protein B</fullName>
        <shortName evidence="1">Protein UvrB</shortName>
    </recommendedName>
    <alternativeName>
        <fullName evidence="1">Excinuclease ABC subunit B</fullName>
    </alternativeName>
</protein>
<evidence type="ECO:0000255" key="1">
    <source>
        <dbReference type="HAMAP-Rule" id="MF_00204"/>
    </source>
</evidence>
<sequence>MGEFKIQSRFKPTGDQPQAIDKLVNSIKSNNRAQTLLGVTGSGKTFTMANVIEKLQRPTIILAHNKTLAAQLCSEFKEFFPDNIVEYFVSYYDYYQPEAYVPQTDTFIEKDASINDEIDKLRHSATSALFERRDVIIVASVSCIYGLGNPDEYKKLTISLRTGMEKERDEVIKKLIEIQYERNDIDFSRGTFRVRGDSLDIIPASYSNKGIRIEFFGDEIDRIREFDVLTGSILGERNHVAITPASHFATSRETVDKAIGIIEGELEERLRELNAQDKLLEAQRLRQRTNFDIEMIKEMGYCSGIENYSRILDGRASGTPPKTLIDYFPEDFLMFIDESHVTLPQVRAMYAGDRSRKNTLVDYGFRLPCAYDNRPLKFEEFEKKINQVVFVSATPSAYEIDNSEEIAEQIIRPTGLLDPEIIIRPIKGQIDDLYGEINKTIECGFRILITTLTKRMSEDLTKYLIELGVKTTYMHSDIDTIERMKIIRDLRLGEYDVLVGINLLREGLDIPEVALVAILDADKEGFLRSETSLIQTIGRAARNSESKVIMYADNITKSMDKAMKETERRRAIQKDYNERHGIVPTTIIKDVRDIIEATKVAEEVEEYKAADKKKLTKKEKDKLIKDLTEEMLLAAKNLQFERAAELRDIINEIKDGK</sequence>
<proteinExistence type="inferred from homology"/>
<dbReference type="EMBL" id="CP000721">
    <property type="protein sequence ID" value="ABR36970.1"/>
    <property type="molecule type" value="Genomic_DNA"/>
</dbReference>
<dbReference type="RefSeq" id="WP_012061015.1">
    <property type="nucleotide sequence ID" value="NC_009617.1"/>
</dbReference>
<dbReference type="SMR" id="A6M2Z0"/>
<dbReference type="KEGG" id="cbe:Cbei_4864"/>
<dbReference type="eggNOG" id="COG0556">
    <property type="taxonomic scope" value="Bacteria"/>
</dbReference>
<dbReference type="HOGENOM" id="CLU_009621_2_1_9"/>
<dbReference type="Proteomes" id="UP000000565">
    <property type="component" value="Chromosome"/>
</dbReference>
<dbReference type="GO" id="GO:0005737">
    <property type="term" value="C:cytoplasm"/>
    <property type="evidence" value="ECO:0007669"/>
    <property type="project" value="UniProtKB-SubCell"/>
</dbReference>
<dbReference type="GO" id="GO:0009380">
    <property type="term" value="C:excinuclease repair complex"/>
    <property type="evidence" value="ECO:0007669"/>
    <property type="project" value="InterPro"/>
</dbReference>
<dbReference type="GO" id="GO:0005524">
    <property type="term" value="F:ATP binding"/>
    <property type="evidence" value="ECO:0007669"/>
    <property type="project" value="UniProtKB-UniRule"/>
</dbReference>
<dbReference type="GO" id="GO:0016887">
    <property type="term" value="F:ATP hydrolysis activity"/>
    <property type="evidence" value="ECO:0007669"/>
    <property type="project" value="InterPro"/>
</dbReference>
<dbReference type="GO" id="GO:0003677">
    <property type="term" value="F:DNA binding"/>
    <property type="evidence" value="ECO:0007669"/>
    <property type="project" value="UniProtKB-UniRule"/>
</dbReference>
<dbReference type="GO" id="GO:0009381">
    <property type="term" value="F:excinuclease ABC activity"/>
    <property type="evidence" value="ECO:0007669"/>
    <property type="project" value="UniProtKB-UniRule"/>
</dbReference>
<dbReference type="GO" id="GO:0004386">
    <property type="term" value="F:helicase activity"/>
    <property type="evidence" value="ECO:0007669"/>
    <property type="project" value="UniProtKB-KW"/>
</dbReference>
<dbReference type="GO" id="GO:0006289">
    <property type="term" value="P:nucleotide-excision repair"/>
    <property type="evidence" value="ECO:0007669"/>
    <property type="project" value="UniProtKB-UniRule"/>
</dbReference>
<dbReference type="GO" id="GO:0009432">
    <property type="term" value="P:SOS response"/>
    <property type="evidence" value="ECO:0007669"/>
    <property type="project" value="UniProtKB-UniRule"/>
</dbReference>
<dbReference type="CDD" id="cd17916">
    <property type="entry name" value="DEXHc_UvrB"/>
    <property type="match status" value="1"/>
</dbReference>
<dbReference type="CDD" id="cd18790">
    <property type="entry name" value="SF2_C_UvrB"/>
    <property type="match status" value="1"/>
</dbReference>
<dbReference type="Gene3D" id="3.40.50.300">
    <property type="entry name" value="P-loop containing nucleotide triphosphate hydrolases"/>
    <property type="match status" value="3"/>
</dbReference>
<dbReference type="Gene3D" id="4.10.860.10">
    <property type="entry name" value="UVR domain"/>
    <property type="match status" value="1"/>
</dbReference>
<dbReference type="HAMAP" id="MF_00204">
    <property type="entry name" value="UvrB"/>
    <property type="match status" value="1"/>
</dbReference>
<dbReference type="InterPro" id="IPR006935">
    <property type="entry name" value="Helicase/UvrB_N"/>
</dbReference>
<dbReference type="InterPro" id="IPR014001">
    <property type="entry name" value="Helicase_ATP-bd"/>
</dbReference>
<dbReference type="InterPro" id="IPR001650">
    <property type="entry name" value="Helicase_C-like"/>
</dbReference>
<dbReference type="InterPro" id="IPR027417">
    <property type="entry name" value="P-loop_NTPase"/>
</dbReference>
<dbReference type="InterPro" id="IPR001943">
    <property type="entry name" value="UVR_dom"/>
</dbReference>
<dbReference type="InterPro" id="IPR036876">
    <property type="entry name" value="UVR_dom_sf"/>
</dbReference>
<dbReference type="InterPro" id="IPR004807">
    <property type="entry name" value="UvrB"/>
</dbReference>
<dbReference type="InterPro" id="IPR041471">
    <property type="entry name" value="UvrB_inter"/>
</dbReference>
<dbReference type="InterPro" id="IPR024759">
    <property type="entry name" value="UvrB_YAD/RRR_dom"/>
</dbReference>
<dbReference type="NCBIfam" id="NF003673">
    <property type="entry name" value="PRK05298.1"/>
    <property type="match status" value="1"/>
</dbReference>
<dbReference type="NCBIfam" id="TIGR00631">
    <property type="entry name" value="uvrb"/>
    <property type="match status" value="1"/>
</dbReference>
<dbReference type="PANTHER" id="PTHR24029">
    <property type="entry name" value="UVRABC SYSTEM PROTEIN B"/>
    <property type="match status" value="1"/>
</dbReference>
<dbReference type="PANTHER" id="PTHR24029:SF0">
    <property type="entry name" value="UVRABC SYSTEM PROTEIN B"/>
    <property type="match status" value="1"/>
</dbReference>
<dbReference type="Pfam" id="PF00271">
    <property type="entry name" value="Helicase_C"/>
    <property type="match status" value="1"/>
</dbReference>
<dbReference type="Pfam" id="PF04851">
    <property type="entry name" value="ResIII"/>
    <property type="match status" value="1"/>
</dbReference>
<dbReference type="Pfam" id="PF02151">
    <property type="entry name" value="UVR"/>
    <property type="match status" value="1"/>
</dbReference>
<dbReference type="Pfam" id="PF12344">
    <property type="entry name" value="UvrB"/>
    <property type="match status" value="1"/>
</dbReference>
<dbReference type="Pfam" id="PF17757">
    <property type="entry name" value="UvrB_inter"/>
    <property type="match status" value="1"/>
</dbReference>
<dbReference type="SMART" id="SM00487">
    <property type="entry name" value="DEXDc"/>
    <property type="match status" value="1"/>
</dbReference>
<dbReference type="SMART" id="SM00490">
    <property type="entry name" value="HELICc"/>
    <property type="match status" value="1"/>
</dbReference>
<dbReference type="SUPFAM" id="SSF46600">
    <property type="entry name" value="C-terminal UvrC-binding domain of UvrB"/>
    <property type="match status" value="1"/>
</dbReference>
<dbReference type="SUPFAM" id="SSF52540">
    <property type="entry name" value="P-loop containing nucleoside triphosphate hydrolases"/>
    <property type="match status" value="2"/>
</dbReference>
<dbReference type="PROSITE" id="PS51192">
    <property type="entry name" value="HELICASE_ATP_BIND_1"/>
    <property type="match status" value="1"/>
</dbReference>
<dbReference type="PROSITE" id="PS51194">
    <property type="entry name" value="HELICASE_CTER"/>
    <property type="match status" value="1"/>
</dbReference>
<dbReference type="PROSITE" id="PS50151">
    <property type="entry name" value="UVR"/>
    <property type="match status" value="1"/>
</dbReference>
<reference key="1">
    <citation type="submission" date="2007-06" db="EMBL/GenBank/DDBJ databases">
        <title>Complete sequence of Clostridium beijerinckii NCIMB 8052.</title>
        <authorList>
            <consortium name="US DOE Joint Genome Institute"/>
            <person name="Copeland A."/>
            <person name="Lucas S."/>
            <person name="Lapidus A."/>
            <person name="Barry K."/>
            <person name="Detter J.C."/>
            <person name="Glavina del Rio T."/>
            <person name="Hammon N."/>
            <person name="Israni S."/>
            <person name="Dalin E."/>
            <person name="Tice H."/>
            <person name="Pitluck S."/>
            <person name="Sims D."/>
            <person name="Brettin T."/>
            <person name="Bruce D."/>
            <person name="Tapia R."/>
            <person name="Brainard J."/>
            <person name="Schmutz J."/>
            <person name="Larimer F."/>
            <person name="Land M."/>
            <person name="Hauser L."/>
            <person name="Kyrpides N."/>
            <person name="Mikhailova N."/>
            <person name="Bennet G."/>
            <person name="Cann I."/>
            <person name="Chen J.-S."/>
            <person name="Contreras A.L."/>
            <person name="Jones D."/>
            <person name="Kashket E."/>
            <person name="Mitchell W."/>
            <person name="Stoddard S."/>
            <person name="Schwarz W."/>
            <person name="Qureshi N."/>
            <person name="Young M."/>
            <person name="Shi Z."/>
            <person name="Ezeji T."/>
            <person name="White B."/>
            <person name="Blaschek H."/>
            <person name="Richardson P."/>
        </authorList>
    </citation>
    <scope>NUCLEOTIDE SEQUENCE [LARGE SCALE GENOMIC DNA]</scope>
    <source>
        <strain>ATCC 51743 / NCIMB 8052</strain>
    </source>
</reference>
<organism>
    <name type="scientific">Clostridium beijerinckii (strain ATCC 51743 / NCIMB 8052)</name>
    <name type="common">Clostridium acetobutylicum</name>
    <dbReference type="NCBI Taxonomy" id="290402"/>
    <lineage>
        <taxon>Bacteria</taxon>
        <taxon>Bacillati</taxon>
        <taxon>Bacillota</taxon>
        <taxon>Clostridia</taxon>
        <taxon>Eubacteriales</taxon>
        <taxon>Clostridiaceae</taxon>
        <taxon>Clostridium</taxon>
    </lineage>
</organism>